<feature type="chain" id="PRO_0000410637" description="Biogenesis of lysosome-related organelles complex 1 subunit BLS1">
    <location>
        <begin position="1"/>
        <end position="122"/>
    </location>
</feature>
<feature type="modified residue" description="Phosphoserine" evidence="2">
    <location>
        <position position="33"/>
    </location>
</feature>
<proteinExistence type="inferred from homology"/>
<reference key="1">
    <citation type="journal article" date="2011" name="PLoS Genet.">
        <title>Whole-genome comparison reveals novel genetic elements that characterize the genome of industrial strains of Saccharomyces cerevisiae.</title>
        <authorList>
            <person name="Borneman A.R."/>
            <person name="Desany B.A."/>
            <person name="Riches D."/>
            <person name="Affourtit J.P."/>
            <person name="Forgan A.H."/>
            <person name="Pretorius I.S."/>
            <person name="Egholm M."/>
            <person name="Chambers P.J."/>
        </authorList>
    </citation>
    <scope>NUCLEOTIDE SEQUENCE [LARGE SCALE GENOMIC DNA]</scope>
    <source>
        <strain>FostersO</strain>
    </source>
</reference>
<comment type="function">
    <text evidence="1">Component of the biogenesis of lysosome-related organelles complex-1 (BLOC-1), a complex involved in endosomal cargo sorting.</text>
</comment>
<comment type="subunit">
    <text evidence="1">Component of the biogenesis of lysosome-related organelles complex-1 (BLOC-1) composed of at least BLI1, BLS1, CNL1, KXD1, SNN1 and VAB2.</text>
</comment>
<comment type="subcellular location">
    <subcellularLocation>
        <location evidence="1">Endosome</location>
    </subcellularLocation>
</comment>
<comment type="similarity">
    <text evidence="3">Belongs to the BLOC1S1 family.</text>
</comment>
<comment type="sequence caution" evidence="3">
    <conflict type="erroneous initiation">
        <sequence resource="EMBL-CDS" id="EGA61161"/>
    </conflict>
    <text>Truncated N-terminus.</text>
</comment>
<gene>
    <name type="primary">BLS1</name>
    <name type="ORF">FOSTERSO_3384</name>
</gene>
<evidence type="ECO:0000250" key="1"/>
<evidence type="ECO:0000250" key="2">
    <source>
        <dbReference type="UniProtKB" id="Q06071"/>
    </source>
</evidence>
<evidence type="ECO:0000305" key="3"/>
<protein>
    <recommendedName>
        <fullName>Biogenesis of lysosome-related organelles complex 1 subunit BLS1</fullName>
        <shortName>BLOC-1 subunit BLS1</shortName>
    </recommendedName>
    <alternativeName>
        <fullName>BLOS1-homolog</fullName>
    </alternativeName>
</protein>
<accession>E7NL30</accession>
<dbReference type="EMBL" id="AEEZ01000072">
    <property type="protein sequence ID" value="EGA61161.1"/>
    <property type="status" value="ALT_INIT"/>
    <property type="molecule type" value="Genomic_DNA"/>
</dbReference>
<dbReference type="SMR" id="E7NL30"/>
<dbReference type="HOGENOM" id="CLU_150164_0_0_1"/>
<dbReference type="OrthoDB" id="40475at4893"/>
<dbReference type="GO" id="GO:0005768">
    <property type="term" value="C:endosome"/>
    <property type="evidence" value="ECO:0007669"/>
    <property type="project" value="UniProtKB-SubCell"/>
</dbReference>
<organism>
    <name type="scientific">Saccharomyces cerevisiae (strain FostersO)</name>
    <name type="common">Baker's yeast</name>
    <dbReference type="NCBI Taxonomy" id="764101"/>
    <lineage>
        <taxon>Eukaryota</taxon>
        <taxon>Fungi</taxon>
        <taxon>Dikarya</taxon>
        <taxon>Ascomycota</taxon>
        <taxon>Saccharomycotina</taxon>
        <taxon>Saccharomycetes</taxon>
        <taxon>Saccharomycetales</taxon>
        <taxon>Saccharomycetaceae</taxon>
        <taxon>Saccharomyces</taxon>
    </lineage>
</organism>
<sequence>MFLTFSMCVNWIIVKMPNRSEELDRLLDKIINSPHRTEASKTLQEIENNQSYILNVQLKKLLRLHDDSFKNKCVSPINYMLEKYTPYMGHTEALQKEAELVDRDLRILEMTYQLIEKNRNSK</sequence>
<name>BL1S1_YEASO</name>
<keyword id="KW-0967">Endosome</keyword>
<keyword id="KW-0597">Phosphoprotein</keyword>
<keyword id="KW-0813">Transport</keyword>